<dbReference type="PIR" id="A28890">
    <property type="entry name" value="A28890"/>
</dbReference>
<dbReference type="GO" id="GO:0005576">
    <property type="term" value="C:extracellular region"/>
    <property type="evidence" value="ECO:0007669"/>
    <property type="project" value="UniProtKB-SubCell"/>
</dbReference>
<dbReference type="GO" id="GO:0090729">
    <property type="term" value="F:toxin activity"/>
    <property type="evidence" value="ECO:0007669"/>
    <property type="project" value="UniProtKB-KW"/>
</dbReference>
<dbReference type="GO" id="GO:0006952">
    <property type="term" value="P:defense response"/>
    <property type="evidence" value="ECO:0007669"/>
    <property type="project" value="InterPro"/>
</dbReference>
<dbReference type="InterPro" id="IPR001855">
    <property type="entry name" value="Defensin_beta-like"/>
</dbReference>
<dbReference type="Pfam" id="PF00711">
    <property type="entry name" value="Defensin_beta"/>
    <property type="match status" value="1"/>
</dbReference>
<dbReference type="SUPFAM" id="SSF57392">
    <property type="entry name" value="Defensin-like"/>
    <property type="match status" value="1"/>
</dbReference>
<reference key="1">
    <citation type="journal article" date="1988" name="Biochem. Biophys. Res. Commun.">
        <title>Purification and characterization of a lethal toxin from the venom of Heloderma horridum horridum.</title>
        <authorList>
            <person name="Komori Y."/>
            <person name="Nikai T."/>
            <person name="Sugihara H."/>
        </authorList>
    </citation>
    <scope>PROTEIN SEQUENCE</scope>
    <scope>FUNCTION</scope>
    <scope>SUBCELLULAR LOCATION</scope>
    <scope>TISSUE SPECIFICITY</scope>
    <scope>TOXIC DOSE</scope>
    <source>
        <tissue>Venom</tissue>
    </source>
</reference>
<keyword id="KW-0903">Direct protein sequencing</keyword>
<keyword id="KW-0528">Neurotoxin</keyword>
<keyword id="KW-0964">Secreted</keyword>
<keyword id="KW-0800">Toxin</keyword>
<protein>
    <recommendedName>
        <fullName>Helofensin-1</fullName>
    </recommendedName>
    <alternativeName>
        <fullName>Lethal toxin</fullName>
    </alternativeName>
</protein>
<comment type="function">
    <text evidence="1">Lethal toxin which possesses an inhibitory effect on direct electrical stimulation of the isolated hemi-diaphragm. Neither hemorrhagic nor hemolytic activities are detected. Phospholipase A2 activity, proteolytic activity and arginine esterolytic activity are absent.</text>
</comment>
<comment type="subcellular location">
    <subcellularLocation>
        <location evidence="1">Secreted</location>
    </subcellularLocation>
</comment>
<comment type="tissue specificity">
    <text evidence="1">Expressed by the venom gland.</text>
</comment>
<comment type="toxic dose">
    <text evidence="1">LD(50) is 0.135 mg/kg on mice.</text>
</comment>
<comment type="similarity">
    <text evidence="2">Belongs to the beta-defensin family. Helofensin subfamily.</text>
</comment>
<evidence type="ECO:0000269" key="1">
    <source>
    </source>
</evidence>
<evidence type="ECO:0000305" key="2"/>
<sequence>AYTTEQCRALNGTCRFYACFPKNVVIGKCDWLG</sequence>
<proteinExistence type="evidence at protein level"/>
<organism>
    <name type="scientific">Heloderma horridum horridum</name>
    <name type="common">Mexican beaded lizard</name>
    <dbReference type="NCBI Taxonomy" id="8552"/>
    <lineage>
        <taxon>Eukaryota</taxon>
        <taxon>Metazoa</taxon>
        <taxon>Chordata</taxon>
        <taxon>Craniata</taxon>
        <taxon>Vertebrata</taxon>
        <taxon>Euteleostomi</taxon>
        <taxon>Lepidosauria</taxon>
        <taxon>Squamata</taxon>
        <taxon>Bifurcata</taxon>
        <taxon>Unidentata</taxon>
        <taxon>Episquamata</taxon>
        <taxon>Toxicofera</taxon>
        <taxon>Anguimorpha</taxon>
        <taxon>Neoanguimorpha</taxon>
        <taxon>Helodermatidae</taxon>
        <taxon>Heloderma</taxon>
    </lineage>
</organism>
<feature type="chain" id="PRO_0000093669" description="Helofensin-1">
    <location>
        <begin position="1"/>
        <end position="33" status="greater than"/>
    </location>
</feature>
<feature type="unsure residue" description="Assigned by comparison with orthologs">
    <location>
        <position position="7"/>
    </location>
</feature>
<feature type="unsure residue" description="Assigned by comparison with orthologs">
    <location>
        <position position="11"/>
    </location>
</feature>
<feature type="unsure residue" description="Assigned by comparison with orthologs">
    <location>
        <position position="14"/>
    </location>
</feature>
<feature type="unsure residue" description="Assigned by comparison with orthologs">
    <location>
        <position position="19"/>
    </location>
</feature>
<feature type="unsure residue" description="Assigned by comparison with orthologs">
    <location>
        <position position="29"/>
    </location>
</feature>
<feature type="non-terminal residue">
    <location>
        <position position="33"/>
    </location>
</feature>
<name>LETH1_HELHO</name>
<accession>Q7LZ31</accession>